<feature type="chain" id="PRO_0000149801" description="Multiprotein-bridging factor 1">
    <location>
        <begin position="1"/>
        <end position="152"/>
    </location>
</feature>
<feature type="domain" description="HTH cro/C1-type" evidence="2">
    <location>
        <begin position="86"/>
        <end position="140"/>
    </location>
</feature>
<feature type="DNA-binding region" description="H-T-H motif" evidence="2">
    <location>
        <begin position="97"/>
        <end position="116"/>
    </location>
</feature>
<feature type="region of interest" description="Disordered" evidence="3">
    <location>
        <begin position="1"/>
        <end position="32"/>
    </location>
</feature>
<feature type="compositionally biased region" description="Polar residues" evidence="3">
    <location>
        <begin position="1"/>
        <end position="11"/>
    </location>
</feature>
<feature type="compositionally biased region" description="Polar residues" evidence="3">
    <location>
        <begin position="22"/>
        <end position="32"/>
    </location>
</feature>
<evidence type="ECO:0000250" key="1">
    <source>
        <dbReference type="UniProtKB" id="O14467"/>
    </source>
</evidence>
<evidence type="ECO:0000255" key="2">
    <source>
        <dbReference type="PROSITE-ProRule" id="PRU00257"/>
    </source>
</evidence>
<evidence type="ECO:0000256" key="3">
    <source>
        <dbReference type="SAM" id="MobiDB-lite"/>
    </source>
</evidence>
<evidence type="ECO:0000305" key="4"/>
<gene>
    <name type="primary">MBF1</name>
    <name type="ordered locus">AFR526C</name>
</gene>
<name>MBF1_EREGS</name>
<sequence length="152" mass="16449">MSSDWDTNTVIGQRVRTGGSGPRQQVARTQGQINAARRAGLVLSVDKKYASSNTKANNEGQRLTMVDRETDIVKPKKLDPSVGRAIAKGRGDKGMTQKDLATRINEKPTVINDYEAGRAIPNQQILAKMERALGVKLRGKGIGEPLGGPKKK</sequence>
<reference key="1">
    <citation type="journal article" date="2004" name="Science">
        <title>The Ashbya gossypii genome as a tool for mapping the ancient Saccharomyces cerevisiae genome.</title>
        <authorList>
            <person name="Dietrich F.S."/>
            <person name="Voegeli S."/>
            <person name="Brachat S."/>
            <person name="Lerch A."/>
            <person name="Gates K."/>
            <person name="Steiner S."/>
            <person name="Mohr C."/>
            <person name="Poehlmann R."/>
            <person name="Luedi P."/>
            <person name="Choi S."/>
            <person name="Wing R.A."/>
            <person name="Flavier A."/>
            <person name="Gaffney T.D."/>
            <person name="Philippsen P."/>
        </authorList>
    </citation>
    <scope>NUCLEOTIDE SEQUENCE [LARGE SCALE GENOMIC DNA]</scope>
    <source>
        <strain>ATCC 10895 / CBS 109.51 / FGSC 9923 / NRRL Y-1056</strain>
    </source>
</reference>
<reference key="2">
    <citation type="journal article" date="2013" name="G3 (Bethesda)">
        <title>Genomes of Ashbya fungi isolated from insects reveal four mating-type loci, numerous translocations, lack of transposons, and distinct gene duplications.</title>
        <authorList>
            <person name="Dietrich F.S."/>
            <person name="Voegeli S."/>
            <person name="Kuo S."/>
            <person name="Philippsen P."/>
        </authorList>
    </citation>
    <scope>GENOME REANNOTATION</scope>
    <source>
        <strain>ATCC 10895 / CBS 109.51 / FGSC 9923 / NRRL Y-1056</strain>
    </source>
</reference>
<protein>
    <recommendedName>
        <fullName>Multiprotein-bridging factor 1</fullName>
    </recommendedName>
</protein>
<organism>
    <name type="scientific">Eremothecium gossypii (strain ATCC 10895 / CBS 109.51 / FGSC 9923 / NRRL Y-1056)</name>
    <name type="common">Yeast</name>
    <name type="synonym">Ashbya gossypii</name>
    <dbReference type="NCBI Taxonomy" id="284811"/>
    <lineage>
        <taxon>Eukaryota</taxon>
        <taxon>Fungi</taxon>
        <taxon>Dikarya</taxon>
        <taxon>Ascomycota</taxon>
        <taxon>Saccharomycotina</taxon>
        <taxon>Saccharomycetes</taxon>
        <taxon>Saccharomycetales</taxon>
        <taxon>Saccharomycetaceae</taxon>
        <taxon>Eremothecium</taxon>
    </lineage>
</organism>
<comment type="function">
    <text evidence="1">Transcriptional coactivator that stimulates GCN4-dependent transcriptional activity by bridging the DNA-binding region of GCN4 and TBP (SPT15), thereby recruiting TBP to GCN4-bound promoters. Involved in induction of the ribosome quality control (RQC) pathway; a pathway that degrades nascent peptide chains during problematic translation. Required to prevent stalled ribosomes from frameshifting.</text>
</comment>
<comment type="similarity">
    <text evidence="4">Belongs to the MBF1 family.</text>
</comment>
<dbReference type="EMBL" id="AE016819">
    <property type="protein sequence ID" value="AAS53897.1"/>
    <property type="molecule type" value="Genomic_DNA"/>
</dbReference>
<dbReference type="RefSeq" id="NP_986073.1">
    <property type="nucleotide sequence ID" value="NM_212209.1"/>
</dbReference>
<dbReference type="SMR" id="Q752P7"/>
<dbReference type="FunCoup" id="Q752P7">
    <property type="interactions" value="800"/>
</dbReference>
<dbReference type="STRING" id="284811.Q752P7"/>
<dbReference type="EnsemblFungi" id="AAS53897">
    <property type="protein sequence ID" value="AAS53897"/>
    <property type="gene ID" value="AGOS_AFR526C"/>
</dbReference>
<dbReference type="GeneID" id="4622352"/>
<dbReference type="KEGG" id="ago:AGOS_AFR526C"/>
<dbReference type="eggNOG" id="KOG3398">
    <property type="taxonomic scope" value="Eukaryota"/>
</dbReference>
<dbReference type="HOGENOM" id="CLU_112609_0_1_1"/>
<dbReference type="InParanoid" id="Q752P7"/>
<dbReference type="OMA" id="GKNKSCK"/>
<dbReference type="OrthoDB" id="10253401at2759"/>
<dbReference type="Proteomes" id="UP000000591">
    <property type="component" value="Chromosome VI"/>
</dbReference>
<dbReference type="GO" id="GO:0005737">
    <property type="term" value="C:cytoplasm"/>
    <property type="evidence" value="ECO:0007669"/>
    <property type="project" value="EnsemblFungi"/>
</dbReference>
<dbReference type="GO" id="GO:0005634">
    <property type="term" value="C:nucleus"/>
    <property type="evidence" value="ECO:0000318"/>
    <property type="project" value="GO_Central"/>
</dbReference>
<dbReference type="GO" id="GO:0003677">
    <property type="term" value="F:DNA binding"/>
    <property type="evidence" value="ECO:0007669"/>
    <property type="project" value="UniProtKB-KW"/>
</dbReference>
<dbReference type="GO" id="GO:0043022">
    <property type="term" value="F:ribosome binding"/>
    <property type="evidence" value="ECO:0007669"/>
    <property type="project" value="EnsemblFungi"/>
</dbReference>
<dbReference type="GO" id="GO:0140469">
    <property type="term" value="P:GCN2-mediated signaling"/>
    <property type="evidence" value="ECO:0007669"/>
    <property type="project" value="EnsemblFungi"/>
</dbReference>
<dbReference type="GO" id="GO:1990145">
    <property type="term" value="P:maintenance of translational fidelity"/>
    <property type="evidence" value="ECO:0007669"/>
    <property type="project" value="EnsemblFungi"/>
</dbReference>
<dbReference type="GO" id="GO:0072344">
    <property type="term" value="P:rescue of stalled ribosome"/>
    <property type="evidence" value="ECO:0007669"/>
    <property type="project" value="EnsemblFungi"/>
</dbReference>
<dbReference type="CDD" id="cd00093">
    <property type="entry name" value="HTH_XRE"/>
    <property type="match status" value="1"/>
</dbReference>
<dbReference type="FunFam" id="1.10.260.40:FF:000015">
    <property type="entry name" value="Endothelial differentiation-related factor 1"/>
    <property type="match status" value="1"/>
</dbReference>
<dbReference type="Gene3D" id="1.10.260.40">
    <property type="entry name" value="lambda repressor-like DNA-binding domains"/>
    <property type="match status" value="1"/>
</dbReference>
<dbReference type="InterPro" id="IPR001387">
    <property type="entry name" value="Cro/C1-type_HTH"/>
</dbReference>
<dbReference type="InterPro" id="IPR010982">
    <property type="entry name" value="Lambda_DNA-bd_dom_sf"/>
</dbReference>
<dbReference type="InterPro" id="IPR013729">
    <property type="entry name" value="MBF1_N"/>
</dbReference>
<dbReference type="PANTHER" id="PTHR10245:SF15">
    <property type="entry name" value="ENDOTHELIAL DIFFERENTIATION-RELATED FACTOR 1"/>
    <property type="match status" value="1"/>
</dbReference>
<dbReference type="PANTHER" id="PTHR10245">
    <property type="entry name" value="ENDOTHELIAL DIFFERENTIATION-RELATED FACTOR 1 MULTIPROTEIN BRIDGING FACTOR 1"/>
    <property type="match status" value="1"/>
</dbReference>
<dbReference type="Pfam" id="PF01381">
    <property type="entry name" value="HTH_3"/>
    <property type="match status" value="1"/>
</dbReference>
<dbReference type="Pfam" id="PF08523">
    <property type="entry name" value="MBF1"/>
    <property type="match status" value="1"/>
</dbReference>
<dbReference type="SMART" id="SM00530">
    <property type="entry name" value="HTH_XRE"/>
    <property type="match status" value="1"/>
</dbReference>
<dbReference type="SUPFAM" id="SSF47413">
    <property type="entry name" value="lambda repressor-like DNA-binding domains"/>
    <property type="match status" value="1"/>
</dbReference>
<dbReference type="PROSITE" id="PS50943">
    <property type="entry name" value="HTH_CROC1"/>
    <property type="match status" value="1"/>
</dbReference>
<proteinExistence type="inferred from homology"/>
<keyword id="KW-0010">Activator</keyword>
<keyword id="KW-0238">DNA-binding</keyword>
<keyword id="KW-1185">Reference proteome</keyword>
<keyword id="KW-0804">Transcription</keyword>
<keyword id="KW-0805">Transcription regulation</keyword>
<accession>Q752P7</accession>